<protein>
    <recommendedName>
        <fullName evidence="1">Sigma factor-binding protein Crl</fullName>
    </recommendedName>
</protein>
<keyword id="KW-0010">Activator</keyword>
<keyword id="KW-0963">Cytoplasm</keyword>
<keyword id="KW-0804">Transcription</keyword>
<keyword id="KW-0805">Transcription regulation</keyword>
<accession>C3LQ47</accession>
<gene>
    <name evidence="1" type="primary">crl</name>
    <name type="ordered locus">VCM66_2198</name>
</gene>
<feature type="chain" id="PRO_1000164427" description="Sigma factor-binding protein Crl">
    <location>
        <begin position="1"/>
        <end position="129"/>
    </location>
</feature>
<feature type="region of interest" description="Essential for activity" evidence="1">
    <location>
        <begin position="99"/>
        <end position="119"/>
    </location>
</feature>
<sequence length="129" mass="14963">MSEMTKTPTHYRLLSTLKAMGPYLREGQCSERFYLFDCLASCVNDKKSPEKREFWGWWMELTQNEQEMSACYHIGRYTLAGDWVAEAIPESAQAEVNHTQAEFHKKLVKTLRERFEISVTVSTESAPFA</sequence>
<name>CRL_VIBCM</name>
<reference key="1">
    <citation type="journal article" date="2008" name="PLoS ONE">
        <title>A recalibrated molecular clock and independent origins for the cholera pandemic clones.</title>
        <authorList>
            <person name="Feng L."/>
            <person name="Reeves P.R."/>
            <person name="Lan R."/>
            <person name="Ren Y."/>
            <person name="Gao C."/>
            <person name="Zhou Z."/>
            <person name="Ren Y."/>
            <person name="Cheng J."/>
            <person name="Wang W."/>
            <person name="Wang J."/>
            <person name="Qian W."/>
            <person name="Li D."/>
            <person name="Wang L."/>
        </authorList>
    </citation>
    <scope>NUCLEOTIDE SEQUENCE [LARGE SCALE GENOMIC DNA]</scope>
    <source>
        <strain>M66-2</strain>
    </source>
</reference>
<evidence type="ECO:0000255" key="1">
    <source>
        <dbReference type="HAMAP-Rule" id="MF_01178"/>
    </source>
</evidence>
<comment type="function">
    <text evidence="1">Binds to the sigma-S subunit of RNA polymerase, activating expression of sigma-S-regulated genes. Stimulates RNA polymerase holoenzyme formation and may bind to several other sigma factors, such as sigma-70 and sigma-32.</text>
</comment>
<comment type="subcellular location">
    <subcellularLocation>
        <location evidence="1">Cytoplasm</location>
    </subcellularLocation>
</comment>
<comment type="similarity">
    <text evidence="1">Belongs to the Crl family.</text>
</comment>
<proteinExistence type="inferred from homology"/>
<organism>
    <name type="scientific">Vibrio cholerae serotype O1 (strain M66-2)</name>
    <dbReference type="NCBI Taxonomy" id="579112"/>
    <lineage>
        <taxon>Bacteria</taxon>
        <taxon>Pseudomonadati</taxon>
        <taxon>Pseudomonadota</taxon>
        <taxon>Gammaproteobacteria</taxon>
        <taxon>Vibrionales</taxon>
        <taxon>Vibrionaceae</taxon>
        <taxon>Vibrio</taxon>
    </lineage>
</organism>
<dbReference type="EMBL" id="CP001233">
    <property type="protein sequence ID" value="ACP06499.1"/>
    <property type="molecule type" value="Genomic_DNA"/>
</dbReference>
<dbReference type="RefSeq" id="WP_001293331.1">
    <property type="nucleotide sequence ID" value="NC_012578.1"/>
</dbReference>
<dbReference type="SMR" id="C3LQ47"/>
<dbReference type="GeneID" id="69719101"/>
<dbReference type="KEGG" id="vcm:VCM66_2198"/>
<dbReference type="HOGENOM" id="CLU_136773_1_0_6"/>
<dbReference type="Proteomes" id="UP000001217">
    <property type="component" value="Chromosome I"/>
</dbReference>
<dbReference type="GO" id="GO:0005737">
    <property type="term" value="C:cytoplasm"/>
    <property type="evidence" value="ECO:0007669"/>
    <property type="project" value="UniProtKB-SubCell"/>
</dbReference>
<dbReference type="GO" id="GO:0045893">
    <property type="term" value="P:positive regulation of DNA-templated transcription"/>
    <property type="evidence" value="ECO:0007669"/>
    <property type="project" value="UniProtKB-UniRule"/>
</dbReference>
<dbReference type="Gene3D" id="3.30.310.230">
    <property type="entry name" value="Sigma factor-binding protein Crl monomer"/>
    <property type="match status" value="1"/>
</dbReference>
<dbReference type="HAMAP" id="MF_01178">
    <property type="entry name" value="Crl"/>
    <property type="match status" value="1"/>
</dbReference>
<dbReference type="InterPro" id="IPR009986">
    <property type="entry name" value="Tscrpt_reg_Crl"/>
</dbReference>
<dbReference type="InterPro" id="IPR038208">
    <property type="entry name" value="Tscrpt_reg_Crl_sf"/>
</dbReference>
<dbReference type="NCBIfam" id="NF008217">
    <property type="entry name" value="PRK10984.1"/>
    <property type="match status" value="1"/>
</dbReference>
<dbReference type="Pfam" id="PF07417">
    <property type="entry name" value="Crl"/>
    <property type="match status" value="1"/>
</dbReference>